<sequence>MSLFPVIVVFGLSFPPIFFELLLSLAIFWLVRRMLVPTGIYDFVWHPALFNTALYCCLFYLISRLFV</sequence>
<name>AAEX_SALDC</name>
<reference key="1">
    <citation type="journal article" date="2011" name="J. Bacteriol.">
        <title>Comparative genomics of 28 Salmonella enterica isolates: evidence for CRISPR-mediated adaptive sublineage evolution.</title>
        <authorList>
            <person name="Fricke W.F."/>
            <person name="Mammel M.K."/>
            <person name="McDermott P.F."/>
            <person name="Tartera C."/>
            <person name="White D.G."/>
            <person name="Leclerc J.E."/>
            <person name="Ravel J."/>
            <person name="Cebula T.A."/>
        </authorList>
    </citation>
    <scope>NUCLEOTIDE SEQUENCE [LARGE SCALE GENOMIC DNA]</scope>
    <source>
        <strain>CT_02021853</strain>
    </source>
</reference>
<protein>
    <recommendedName>
        <fullName evidence="1">Protein AaeX</fullName>
    </recommendedName>
</protein>
<comment type="subcellular location">
    <subcellularLocation>
        <location evidence="1">Cell membrane</location>
        <topology evidence="1">Multi-pass membrane protein</topology>
    </subcellularLocation>
</comment>
<comment type="similarity">
    <text evidence="1">Belongs to the AaeX family.</text>
</comment>
<feature type="chain" id="PRO_1000146760" description="Protein AaeX">
    <location>
        <begin position="1"/>
        <end position="67"/>
    </location>
</feature>
<feature type="transmembrane region" description="Helical" evidence="1">
    <location>
        <begin position="3"/>
        <end position="23"/>
    </location>
</feature>
<feature type="transmembrane region" description="Helical" evidence="1">
    <location>
        <begin position="43"/>
        <end position="63"/>
    </location>
</feature>
<organism>
    <name type="scientific">Salmonella dublin (strain CT_02021853)</name>
    <dbReference type="NCBI Taxonomy" id="439851"/>
    <lineage>
        <taxon>Bacteria</taxon>
        <taxon>Pseudomonadati</taxon>
        <taxon>Pseudomonadota</taxon>
        <taxon>Gammaproteobacteria</taxon>
        <taxon>Enterobacterales</taxon>
        <taxon>Enterobacteriaceae</taxon>
        <taxon>Salmonella</taxon>
    </lineage>
</organism>
<dbReference type="EMBL" id="CP001144">
    <property type="protein sequence ID" value="ACH77467.1"/>
    <property type="molecule type" value="Genomic_DNA"/>
</dbReference>
<dbReference type="RefSeq" id="WP_000051840.1">
    <property type="nucleotide sequence ID" value="NC_011205.1"/>
</dbReference>
<dbReference type="SMR" id="B5FIU4"/>
<dbReference type="GeneID" id="45138179"/>
<dbReference type="KEGG" id="sed:SeD_A3726"/>
<dbReference type="HOGENOM" id="CLU_188292_0_0_6"/>
<dbReference type="Proteomes" id="UP000008322">
    <property type="component" value="Chromosome"/>
</dbReference>
<dbReference type="GO" id="GO:0005886">
    <property type="term" value="C:plasma membrane"/>
    <property type="evidence" value="ECO:0007669"/>
    <property type="project" value="UniProtKB-SubCell"/>
</dbReference>
<dbReference type="HAMAP" id="MF_01546">
    <property type="entry name" value="AaeX"/>
    <property type="match status" value="1"/>
</dbReference>
<dbReference type="InterPro" id="IPR012451">
    <property type="entry name" value="DUF1656"/>
</dbReference>
<dbReference type="NCBIfam" id="NF008615">
    <property type="entry name" value="PRK11594.1"/>
    <property type="match status" value="1"/>
</dbReference>
<dbReference type="Pfam" id="PF07869">
    <property type="entry name" value="DUF1656"/>
    <property type="match status" value="1"/>
</dbReference>
<proteinExistence type="inferred from homology"/>
<evidence type="ECO:0000255" key="1">
    <source>
        <dbReference type="HAMAP-Rule" id="MF_01546"/>
    </source>
</evidence>
<keyword id="KW-1003">Cell membrane</keyword>
<keyword id="KW-0472">Membrane</keyword>
<keyword id="KW-0812">Transmembrane</keyword>
<keyword id="KW-1133">Transmembrane helix</keyword>
<gene>
    <name evidence="1" type="primary">aaeX</name>
    <name type="ordered locus">SeD_A3726</name>
</gene>
<accession>B5FIU4</accession>